<evidence type="ECO:0000255" key="1">
    <source>
        <dbReference type="HAMAP-Rule" id="MF_00046"/>
    </source>
</evidence>
<comment type="function">
    <text evidence="1">Cell wall formation.</text>
</comment>
<comment type="catalytic activity">
    <reaction evidence="1">
        <text>UDP-N-acetyl-alpha-D-muramate + L-alanine + ATP = UDP-N-acetyl-alpha-D-muramoyl-L-alanine + ADP + phosphate + H(+)</text>
        <dbReference type="Rhea" id="RHEA:23372"/>
        <dbReference type="ChEBI" id="CHEBI:15378"/>
        <dbReference type="ChEBI" id="CHEBI:30616"/>
        <dbReference type="ChEBI" id="CHEBI:43474"/>
        <dbReference type="ChEBI" id="CHEBI:57972"/>
        <dbReference type="ChEBI" id="CHEBI:70757"/>
        <dbReference type="ChEBI" id="CHEBI:83898"/>
        <dbReference type="ChEBI" id="CHEBI:456216"/>
        <dbReference type="EC" id="6.3.2.8"/>
    </reaction>
</comment>
<comment type="pathway">
    <text evidence="1">Cell wall biogenesis; peptidoglycan biosynthesis.</text>
</comment>
<comment type="subcellular location">
    <subcellularLocation>
        <location evidence="1">Cytoplasm</location>
    </subcellularLocation>
</comment>
<comment type="similarity">
    <text evidence="1">Belongs to the MurCDEF family.</text>
</comment>
<feature type="chain" id="PRO_0000182088" description="UDP-N-acetylmuramate--L-alanine ligase">
    <location>
        <begin position="1"/>
        <end position="454"/>
    </location>
</feature>
<feature type="binding site" evidence="1">
    <location>
        <begin position="112"/>
        <end position="118"/>
    </location>
    <ligand>
        <name>ATP</name>
        <dbReference type="ChEBI" id="CHEBI:30616"/>
    </ligand>
</feature>
<keyword id="KW-0067">ATP-binding</keyword>
<keyword id="KW-0131">Cell cycle</keyword>
<keyword id="KW-0132">Cell division</keyword>
<keyword id="KW-0133">Cell shape</keyword>
<keyword id="KW-0961">Cell wall biogenesis/degradation</keyword>
<keyword id="KW-0963">Cytoplasm</keyword>
<keyword id="KW-0436">Ligase</keyword>
<keyword id="KW-0547">Nucleotide-binding</keyword>
<keyword id="KW-0573">Peptidoglycan synthesis</keyword>
<keyword id="KW-1185">Reference proteome</keyword>
<gene>
    <name evidence="1" type="primary">murC</name>
    <name type="ordered locus">DVU_2503</name>
</gene>
<dbReference type="EC" id="6.3.2.8" evidence="1"/>
<dbReference type="EMBL" id="AE017285">
    <property type="protein sequence ID" value="AAS96975.1"/>
    <property type="molecule type" value="Genomic_DNA"/>
</dbReference>
<dbReference type="RefSeq" id="WP_010939773.1">
    <property type="nucleotide sequence ID" value="NC_002937.3"/>
</dbReference>
<dbReference type="RefSeq" id="YP_011715.1">
    <property type="nucleotide sequence ID" value="NC_002937.3"/>
</dbReference>
<dbReference type="SMR" id="P61678"/>
<dbReference type="IntAct" id="P61678">
    <property type="interactions" value="3"/>
</dbReference>
<dbReference type="STRING" id="882.DVU_2503"/>
<dbReference type="PaxDb" id="882-DVU_2503"/>
<dbReference type="EnsemblBacteria" id="AAS96975">
    <property type="protein sequence ID" value="AAS96975"/>
    <property type="gene ID" value="DVU_2503"/>
</dbReference>
<dbReference type="KEGG" id="dvu:DVU_2503"/>
<dbReference type="PATRIC" id="fig|882.5.peg.2263"/>
<dbReference type="eggNOG" id="COG0773">
    <property type="taxonomic scope" value="Bacteria"/>
</dbReference>
<dbReference type="HOGENOM" id="CLU_028104_2_2_7"/>
<dbReference type="OrthoDB" id="9804126at2"/>
<dbReference type="PhylomeDB" id="P61678"/>
<dbReference type="UniPathway" id="UPA00219"/>
<dbReference type="Proteomes" id="UP000002194">
    <property type="component" value="Chromosome"/>
</dbReference>
<dbReference type="GO" id="GO:0005737">
    <property type="term" value="C:cytoplasm"/>
    <property type="evidence" value="ECO:0007669"/>
    <property type="project" value="UniProtKB-SubCell"/>
</dbReference>
<dbReference type="GO" id="GO:0005524">
    <property type="term" value="F:ATP binding"/>
    <property type="evidence" value="ECO:0007669"/>
    <property type="project" value="UniProtKB-UniRule"/>
</dbReference>
<dbReference type="GO" id="GO:0008763">
    <property type="term" value="F:UDP-N-acetylmuramate-L-alanine ligase activity"/>
    <property type="evidence" value="ECO:0007669"/>
    <property type="project" value="UniProtKB-UniRule"/>
</dbReference>
<dbReference type="GO" id="GO:0051301">
    <property type="term" value="P:cell division"/>
    <property type="evidence" value="ECO:0007669"/>
    <property type="project" value="UniProtKB-KW"/>
</dbReference>
<dbReference type="GO" id="GO:0071555">
    <property type="term" value="P:cell wall organization"/>
    <property type="evidence" value="ECO:0007669"/>
    <property type="project" value="UniProtKB-KW"/>
</dbReference>
<dbReference type="GO" id="GO:0009252">
    <property type="term" value="P:peptidoglycan biosynthetic process"/>
    <property type="evidence" value="ECO:0007669"/>
    <property type="project" value="UniProtKB-UniRule"/>
</dbReference>
<dbReference type="GO" id="GO:0008360">
    <property type="term" value="P:regulation of cell shape"/>
    <property type="evidence" value="ECO:0007669"/>
    <property type="project" value="UniProtKB-KW"/>
</dbReference>
<dbReference type="Gene3D" id="3.90.190.20">
    <property type="entry name" value="Mur ligase, C-terminal domain"/>
    <property type="match status" value="1"/>
</dbReference>
<dbReference type="Gene3D" id="3.40.1190.10">
    <property type="entry name" value="Mur-like, catalytic domain"/>
    <property type="match status" value="1"/>
</dbReference>
<dbReference type="Gene3D" id="3.40.50.720">
    <property type="entry name" value="NAD(P)-binding Rossmann-like Domain"/>
    <property type="match status" value="1"/>
</dbReference>
<dbReference type="HAMAP" id="MF_00046">
    <property type="entry name" value="MurC"/>
    <property type="match status" value="1"/>
</dbReference>
<dbReference type="InterPro" id="IPR036565">
    <property type="entry name" value="Mur-like_cat_sf"/>
</dbReference>
<dbReference type="InterPro" id="IPR004101">
    <property type="entry name" value="Mur_ligase_C"/>
</dbReference>
<dbReference type="InterPro" id="IPR036615">
    <property type="entry name" value="Mur_ligase_C_dom_sf"/>
</dbReference>
<dbReference type="InterPro" id="IPR013221">
    <property type="entry name" value="Mur_ligase_cen"/>
</dbReference>
<dbReference type="InterPro" id="IPR000713">
    <property type="entry name" value="Mur_ligase_N"/>
</dbReference>
<dbReference type="InterPro" id="IPR050061">
    <property type="entry name" value="MurCDEF_pg_biosynth"/>
</dbReference>
<dbReference type="InterPro" id="IPR005758">
    <property type="entry name" value="UDP-N-AcMur_Ala_ligase_MurC"/>
</dbReference>
<dbReference type="NCBIfam" id="TIGR01082">
    <property type="entry name" value="murC"/>
    <property type="match status" value="1"/>
</dbReference>
<dbReference type="PANTHER" id="PTHR43445:SF3">
    <property type="entry name" value="UDP-N-ACETYLMURAMATE--L-ALANINE LIGASE"/>
    <property type="match status" value="1"/>
</dbReference>
<dbReference type="PANTHER" id="PTHR43445">
    <property type="entry name" value="UDP-N-ACETYLMURAMATE--L-ALANINE LIGASE-RELATED"/>
    <property type="match status" value="1"/>
</dbReference>
<dbReference type="Pfam" id="PF01225">
    <property type="entry name" value="Mur_ligase"/>
    <property type="match status" value="1"/>
</dbReference>
<dbReference type="Pfam" id="PF02875">
    <property type="entry name" value="Mur_ligase_C"/>
    <property type="match status" value="1"/>
</dbReference>
<dbReference type="Pfam" id="PF08245">
    <property type="entry name" value="Mur_ligase_M"/>
    <property type="match status" value="1"/>
</dbReference>
<dbReference type="SUPFAM" id="SSF51984">
    <property type="entry name" value="MurCD N-terminal domain"/>
    <property type="match status" value="1"/>
</dbReference>
<dbReference type="SUPFAM" id="SSF53623">
    <property type="entry name" value="MurD-like peptide ligases, catalytic domain"/>
    <property type="match status" value="1"/>
</dbReference>
<dbReference type="SUPFAM" id="SSF53244">
    <property type="entry name" value="MurD-like peptide ligases, peptide-binding domain"/>
    <property type="match status" value="1"/>
</dbReference>
<protein>
    <recommendedName>
        <fullName evidence="1">UDP-N-acetylmuramate--L-alanine ligase</fullName>
        <ecNumber evidence="1">6.3.2.8</ecNumber>
    </recommendedName>
    <alternativeName>
        <fullName evidence="1">UDP-N-acetylmuramoyl-L-alanine synthetase</fullName>
    </alternativeName>
</protein>
<reference key="1">
    <citation type="journal article" date="2004" name="Nat. Biotechnol.">
        <title>The genome sequence of the anaerobic, sulfate-reducing bacterium Desulfovibrio vulgaris Hildenborough.</title>
        <authorList>
            <person name="Heidelberg J.F."/>
            <person name="Seshadri R."/>
            <person name="Haveman S.A."/>
            <person name="Hemme C.L."/>
            <person name="Paulsen I.T."/>
            <person name="Kolonay J.F."/>
            <person name="Eisen J.A."/>
            <person name="Ward N.L."/>
            <person name="Methe B.A."/>
            <person name="Brinkac L.M."/>
            <person name="Daugherty S.C."/>
            <person name="DeBoy R.T."/>
            <person name="Dodson R.J."/>
            <person name="Durkin A.S."/>
            <person name="Madupu R."/>
            <person name="Nelson W.C."/>
            <person name="Sullivan S.A."/>
            <person name="Fouts D.E."/>
            <person name="Haft D.H."/>
            <person name="Selengut J."/>
            <person name="Peterson J.D."/>
            <person name="Davidsen T.M."/>
            <person name="Zafar N."/>
            <person name="Zhou L."/>
            <person name="Radune D."/>
            <person name="Dimitrov G."/>
            <person name="Hance M."/>
            <person name="Tran K."/>
            <person name="Khouri H.M."/>
            <person name="Gill J."/>
            <person name="Utterback T.R."/>
            <person name="Feldblyum T.V."/>
            <person name="Wall J.D."/>
            <person name="Voordouw G."/>
            <person name="Fraser C.M."/>
        </authorList>
    </citation>
    <scope>NUCLEOTIDE SEQUENCE [LARGE SCALE GENOMIC DNA]</scope>
    <source>
        <strain>ATCC 29579 / DSM 644 / CCUG 34227 / NCIMB 8303 / VKM B-1760 / Hildenborough</strain>
    </source>
</reference>
<sequence>MKNKVRTIHMVGIGGSGMSGIAEVLLNLGYAVHGSDMSDSAVVRRLRKIGAEIFIGHGAGNVSDAEVLVKSTAVRDDNPEVLAAVEKGIPIIPRAEMLAELMRLRTGIAIAGTHGKTTTTSLTAAIFDVAGKDPTVIIGGRLNAYGANARLGEGEYLIAEADESDGSFLCLFPIVNVVTNVDMDHVDFYAGQKEIDEAFVTFMNKVPFYGANVVCGDDPGVRRLLPQVKRRVVTYGFGKDNALRAEVTSCAETSVFTVFLRGGRLGEVHLGQPGRHNILNALAAIGVALEAGISPEHCIEGLARFGGVGRRFERRGERDGVTVVDDYGHHPVEIAATLATARSVYPDRRLVVVFQPHRFSRTQALFGEFCKVFEPVDKLLLTEIYPASEKPIPGVSGQSLAQGIRQVSNTDVTYYQSFDEILAALPGVLRPGDVLLTLGAGSVTTIGQRYVAGE</sequence>
<accession>P61678</accession>
<name>MURC_NITV2</name>
<organism>
    <name type="scientific">Nitratidesulfovibrio vulgaris (strain ATCC 29579 / DSM 644 / CCUG 34227 / NCIMB 8303 / VKM B-1760 / Hildenborough)</name>
    <name type="common">Desulfovibrio vulgaris</name>
    <dbReference type="NCBI Taxonomy" id="882"/>
    <lineage>
        <taxon>Bacteria</taxon>
        <taxon>Pseudomonadati</taxon>
        <taxon>Thermodesulfobacteriota</taxon>
        <taxon>Desulfovibrionia</taxon>
        <taxon>Desulfovibrionales</taxon>
        <taxon>Desulfovibrionaceae</taxon>
        <taxon>Nitratidesulfovibrio</taxon>
    </lineage>
</organism>
<proteinExistence type="inferred from homology"/>